<accession>V5V9Y7</accession>
<evidence type="ECO:0000255" key="1"/>
<evidence type="ECO:0000303" key="2">
    <source>
    </source>
</evidence>
<evidence type="ECO:0000305" key="3"/>
<evidence type="ECO:0000305" key="4">
    <source>
    </source>
</evidence>
<protein>
    <recommendedName>
        <fullName evidence="2">Conotoxin Ca6.2</fullName>
    </recommendedName>
</protein>
<keyword id="KW-1015">Disulfide bond</keyword>
<keyword id="KW-0960">Knottin</keyword>
<keyword id="KW-0964">Secreted</keyword>
<keyword id="KW-0732">Signal</keyword>
<keyword id="KW-0800">Toxin</keyword>
<feature type="signal peptide" evidence="1">
    <location>
        <begin position="1"/>
        <end position="19"/>
    </location>
</feature>
<feature type="propeptide" id="PRO_0000448848" evidence="3">
    <location>
        <begin position="20"/>
        <end position="52"/>
    </location>
</feature>
<feature type="chain" id="PRO_5004741703" description="Conotoxin Ca6.2" evidence="3">
    <location>
        <begin position="53"/>
        <end position="87"/>
    </location>
</feature>
<feature type="disulfide bond" evidence="3">
    <location>
        <begin position="55"/>
        <end position="64"/>
    </location>
</feature>
<feature type="disulfide bond" evidence="3">
    <location>
        <begin position="58"/>
        <end position="70"/>
    </location>
</feature>
<feature type="disulfide bond" evidence="3">
    <location>
        <begin position="63"/>
        <end position="84"/>
    </location>
</feature>
<proteinExistence type="inferred from homology"/>
<dbReference type="EMBL" id="KC582372">
    <property type="protein sequence ID" value="AHB89645.1"/>
    <property type="molecule type" value="mRNA"/>
</dbReference>
<dbReference type="SMR" id="V5V9Y7"/>
<dbReference type="GO" id="GO:0005576">
    <property type="term" value="C:extracellular region"/>
    <property type="evidence" value="ECO:0007669"/>
    <property type="project" value="UniProtKB-SubCell"/>
</dbReference>
<dbReference type="GO" id="GO:0090729">
    <property type="term" value="F:toxin activity"/>
    <property type="evidence" value="ECO:0007669"/>
    <property type="project" value="UniProtKB-KW"/>
</dbReference>
<name>CQ62_CONCB</name>
<comment type="subcellular location">
    <subcellularLocation>
        <location evidence="4">Secreted</location>
    </subcellularLocation>
</comment>
<comment type="tissue specificity">
    <text evidence="4">Expressed by the venom duct.</text>
</comment>
<comment type="domain">
    <text evidence="3">The presence of a 'disulfide through disulfide knot' structurally defines this protein as a knottin.</text>
</comment>
<comment type="domain">
    <text evidence="3">The cysteine framework is VI/VII (C-C-CC-C-C).</text>
</comment>
<comment type="similarity">
    <text evidence="3">Belongs to the conotoxin Q superfamily.</text>
</comment>
<organism>
    <name type="scientific">Conus caracteristicus</name>
    <name type="common">Characteristic cone</name>
    <dbReference type="NCBI Taxonomy" id="89440"/>
    <lineage>
        <taxon>Eukaryota</taxon>
        <taxon>Metazoa</taxon>
        <taxon>Spiralia</taxon>
        <taxon>Lophotrochozoa</taxon>
        <taxon>Mollusca</taxon>
        <taxon>Gastropoda</taxon>
        <taxon>Caenogastropoda</taxon>
        <taxon>Neogastropoda</taxon>
        <taxon>Conoidea</taxon>
        <taxon>Conidae</taxon>
        <taxon>Conus</taxon>
    </lineage>
</organism>
<reference key="1">
    <citation type="journal article" date="2014" name="Mol. Cell. Proteomics">
        <title>Various conotoxin diversifications revealed by a venomic study of Conus flavidus.</title>
        <authorList>
            <person name="Lu A."/>
            <person name="Yang L."/>
            <person name="Xu S."/>
            <person name="Wang C."/>
        </authorList>
    </citation>
    <scope>NUCLEOTIDE SEQUENCE [MRNA]</scope>
    <source>
        <tissue>Venom duct</tissue>
    </source>
</reference>
<sequence length="87" mass="9531">MHTLEMLLLVLLLVPLAPGEGDGQAVGGDRNPSEARRAYKRLLQRPARRMDRGGCTPCGPNLCCSEEFRCGTSTHHQTYGEPACLSY</sequence>